<sequence length="185" mass="20112">MQVSVECQKRPENINPRALRRQGLIPAVLYGHNGTESISLVVGEKAALTLLKKASVNNTLVDVNVPEMPWTGKALIQEVQSHPWKRNLYHLSFFSVSAHGKLDIVVPIKAIGEAIGTKQGGLIEQFVNEVNVSCIADNIPEVIEFDVSEIGVGQSLLVGDLKMPEGVTLKDDPHTTVFAIVAAKR</sequence>
<reference key="1">
    <citation type="journal article" date="2007" name="DNA Res.">
        <title>Complete genomic structure of the bloom-forming toxic cyanobacterium Microcystis aeruginosa NIES-843.</title>
        <authorList>
            <person name="Kaneko T."/>
            <person name="Nakajima N."/>
            <person name="Okamoto S."/>
            <person name="Suzuki I."/>
            <person name="Tanabe Y."/>
            <person name="Tamaoki M."/>
            <person name="Nakamura Y."/>
            <person name="Kasai F."/>
            <person name="Watanabe A."/>
            <person name="Kawashima K."/>
            <person name="Kishida Y."/>
            <person name="Ono A."/>
            <person name="Shimizu Y."/>
            <person name="Takahashi C."/>
            <person name="Minami C."/>
            <person name="Fujishiro T."/>
            <person name="Kohara M."/>
            <person name="Katoh M."/>
            <person name="Nakazaki N."/>
            <person name="Nakayama S."/>
            <person name="Yamada M."/>
            <person name="Tabata S."/>
            <person name="Watanabe M.M."/>
        </authorList>
    </citation>
    <scope>NUCLEOTIDE SEQUENCE [LARGE SCALE GENOMIC DNA]</scope>
    <source>
        <strain>NIES-843 / IAM M-247</strain>
    </source>
</reference>
<gene>
    <name evidence="1" type="primary">rplY</name>
    <name evidence="1" type="synonym">ctc</name>
    <name type="ordered locus">MAE_19600</name>
</gene>
<keyword id="KW-0687">Ribonucleoprotein</keyword>
<keyword id="KW-0689">Ribosomal protein</keyword>
<keyword id="KW-0694">RNA-binding</keyword>
<keyword id="KW-0699">rRNA-binding</keyword>
<organism>
    <name type="scientific">Microcystis aeruginosa (strain NIES-843 / IAM M-2473)</name>
    <dbReference type="NCBI Taxonomy" id="449447"/>
    <lineage>
        <taxon>Bacteria</taxon>
        <taxon>Bacillati</taxon>
        <taxon>Cyanobacteriota</taxon>
        <taxon>Cyanophyceae</taxon>
        <taxon>Oscillatoriophycideae</taxon>
        <taxon>Chroococcales</taxon>
        <taxon>Microcystaceae</taxon>
        <taxon>Microcystis</taxon>
    </lineage>
</organism>
<accession>B0JXF5</accession>
<comment type="function">
    <text evidence="1">This is one of the proteins that binds to the 5S RNA in the ribosome where it forms part of the central protuberance.</text>
</comment>
<comment type="subunit">
    <text evidence="1">Part of the 50S ribosomal subunit; part of the 5S rRNA/L5/L18/L25 subcomplex. Contacts the 5S rRNA. Binds to the 5S rRNA independently of L5 and L18.</text>
</comment>
<comment type="similarity">
    <text evidence="1">Belongs to the bacterial ribosomal protein bL25 family. CTC subfamily.</text>
</comment>
<evidence type="ECO:0000255" key="1">
    <source>
        <dbReference type="HAMAP-Rule" id="MF_01334"/>
    </source>
</evidence>
<evidence type="ECO:0000305" key="2"/>
<feature type="chain" id="PRO_1000086631" description="Large ribosomal subunit protein bL25">
    <location>
        <begin position="1"/>
        <end position="185"/>
    </location>
</feature>
<protein>
    <recommendedName>
        <fullName evidence="1">Large ribosomal subunit protein bL25</fullName>
    </recommendedName>
    <alternativeName>
        <fullName evidence="2">50S ribosomal protein L25</fullName>
    </alternativeName>
    <alternativeName>
        <fullName evidence="1">General stress protein CTC</fullName>
    </alternativeName>
</protein>
<proteinExistence type="inferred from homology"/>
<dbReference type="EMBL" id="AP009552">
    <property type="protein sequence ID" value="BAG01782.1"/>
    <property type="molecule type" value="Genomic_DNA"/>
</dbReference>
<dbReference type="RefSeq" id="WP_012265224.1">
    <property type="nucleotide sequence ID" value="NC_010296.1"/>
</dbReference>
<dbReference type="SMR" id="B0JXF5"/>
<dbReference type="STRING" id="449447.MAE_19600"/>
<dbReference type="PaxDb" id="449447-MAE_19600"/>
<dbReference type="EnsemblBacteria" id="BAG01782">
    <property type="protein sequence ID" value="BAG01782"/>
    <property type="gene ID" value="MAE_19600"/>
</dbReference>
<dbReference type="KEGG" id="mar:MAE_19600"/>
<dbReference type="PATRIC" id="fig|449447.4.peg.1803"/>
<dbReference type="eggNOG" id="COG1825">
    <property type="taxonomic scope" value="Bacteria"/>
</dbReference>
<dbReference type="HOGENOM" id="CLU_075939_2_0_3"/>
<dbReference type="BioCyc" id="MAER449447:MAE_RS08575-MONOMER"/>
<dbReference type="Proteomes" id="UP000001510">
    <property type="component" value="Chromosome"/>
</dbReference>
<dbReference type="GO" id="GO:0022625">
    <property type="term" value="C:cytosolic large ribosomal subunit"/>
    <property type="evidence" value="ECO:0007669"/>
    <property type="project" value="TreeGrafter"/>
</dbReference>
<dbReference type="GO" id="GO:0008097">
    <property type="term" value="F:5S rRNA binding"/>
    <property type="evidence" value="ECO:0007669"/>
    <property type="project" value="InterPro"/>
</dbReference>
<dbReference type="GO" id="GO:0003735">
    <property type="term" value="F:structural constituent of ribosome"/>
    <property type="evidence" value="ECO:0007669"/>
    <property type="project" value="InterPro"/>
</dbReference>
<dbReference type="GO" id="GO:0006412">
    <property type="term" value="P:translation"/>
    <property type="evidence" value="ECO:0007669"/>
    <property type="project" value="UniProtKB-UniRule"/>
</dbReference>
<dbReference type="CDD" id="cd00495">
    <property type="entry name" value="Ribosomal_L25_TL5_CTC"/>
    <property type="match status" value="1"/>
</dbReference>
<dbReference type="Gene3D" id="2.170.120.20">
    <property type="entry name" value="Ribosomal protein L25, beta domain"/>
    <property type="match status" value="1"/>
</dbReference>
<dbReference type="Gene3D" id="2.40.240.10">
    <property type="entry name" value="Ribosomal Protein L25, Chain P"/>
    <property type="match status" value="1"/>
</dbReference>
<dbReference type="HAMAP" id="MF_01334">
    <property type="entry name" value="Ribosomal_bL25_CTC"/>
    <property type="match status" value="1"/>
</dbReference>
<dbReference type="InterPro" id="IPR020056">
    <property type="entry name" value="Rbsml_bL25/Gln-tRNA_synth_N"/>
</dbReference>
<dbReference type="InterPro" id="IPR011035">
    <property type="entry name" value="Ribosomal_bL25/Gln-tRNA_synth"/>
</dbReference>
<dbReference type="InterPro" id="IPR020057">
    <property type="entry name" value="Ribosomal_bL25_b-dom"/>
</dbReference>
<dbReference type="InterPro" id="IPR037121">
    <property type="entry name" value="Ribosomal_bL25_C"/>
</dbReference>
<dbReference type="InterPro" id="IPR001021">
    <property type="entry name" value="Ribosomal_bL25_long"/>
</dbReference>
<dbReference type="InterPro" id="IPR029751">
    <property type="entry name" value="Ribosomal_L25_dom"/>
</dbReference>
<dbReference type="InterPro" id="IPR020930">
    <property type="entry name" value="Ribosomal_uL5_bac-type"/>
</dbReference>
<dbReference type="NCBIfam" id="TIGR00731">
    <property type="entry name" value="bL25_bact_ctc"/>
    <property type="match status" value="1"/>
</dbReference>
<dbReference type="NCBIfam" id="NF004139">
    <property type="entry name" value="PRK05618.4-2"/>
    <property type="match status" value="1"/>
</dbReference>
<dbReference type="NCBIfam" id="NF004612">
    <property type="entry name" value="PRK05943.1"/>
    <property type="match status" value="1"/>
</dbReference>
<dbReference type="PANTHER" id="PTHR33284">
    <property type="entry name" value="RIBOSOMAL PROTEIN L25/GLN-TRNA SYNTHETASE, ANTI-CODON-BINDING DOMAIN-CONTAINING PROTEIN"/>
    <property type="match status" value="1"/>
</dbReference>
<dbReference type="PANTHER" id="PTHR33284:SF1">
    <property type="entry name" value="RIBOSOMAL PROTEIN L25_GLN-TRNA SYNTHETASE, ANTI-CODON-BINDING DOMAIN-CONTAINING PROTEIN"/>
    <property type="match status" value="1"/>
</dbReference>
<dbReference type="Pfam" id="PF01386">
    <property type="entry name" value="Ribosomal_L25p"/>
    <property type="match status" value="1"/>
</dbReference>
<dbReference type="Pfam" id="PF14693">
    <property type="entry name" value="Ribosomal_TL5_C"/>
    <property type="match status" value="1"/>
</dbReference>
<dbReference type="SUPFAM" id="SSF50715">
    <property type="entry name" value="Ribosomal protein L25-like"/>
    <property type="match status" value="1"/>
</dbReference>
<name>RL25_MICAN</name>